<sequence length="473" mass="53087">MTIKLYNTKTRRKEDFEPINKDDVRMYVCGPTVYDRAHLGNARPVIVFDVLYRLLRHTYGPDHVTYVRNFTDVDDKINARAAESGRSIAEITAETTQWFLDDMAAVGALEPSIKDRDHQRAMPRATQYIAQMVTMIEDLIAKGHAYAAEGHVLFAVESYSKYGALSGRSIDDMIAGARVEVAPYKRNPMDFVLWKPSDDATPGWAGPVVGGKSIGRGRPGWHIECSAMAHDLLGATFDIHGGGNDLMFPHHENEIAQSTCAGHNFANVWMHNEMLQVEGKKMSKSLGNFFTVRDLLDQGVPGEVIRFVMLSTHYRKPMDWTEKKREEAEETLWKWKKLTDGAESSRRPHLEIIAALKDDLNTPLAISILHRKFAEAKSDDDKNRFLSTLLLLGIGETWRDGVDVAVEEAFQTVSLIEALIESIEKARAQKDWATSDRTRDGLESAGVKVQISKDGVSWERGPSFDPAKLEALK</sequence>
<evidence type="ECO:0000255" key="1">
    <source>
        <dbReference type="HAMAP-Rule" id="MF_00041"/>
    </source>
</evidence>
<feature type="chain" id="PRO_1000006607" description="Cysteine--tRNA ligase">
    <location>
        <begin position="1"/>
        <end position="473"/>
    </location>
</feature>
<feature type="short sequence motif" description="'HIGH' region">
    <location>
        <begin position="31"/>
        <end position="41"/>
    </location>
</feature>
<feature type="short sequence motif" description="'KMSKS' region">
    <location>
        <begin position="281"/>
        <end position="285"/>
    </location>
</feature>
<feature type="binding site" evidence="1">
    <location>
        <position position="29"/>
    </location>
    <ligand>
        <name>Zn(2+)</name>
        <dbReference type="ChEBI" id="CHEBI:29105"/>
    </ligand>
</feature>
<feature type="binding site" evidence="1">
    <location>
        <position position="225"/>
    </location>
    <ligand>
        <name>Zn(2+)</name>
        <dbReference type="ChEBI" id="CHEBI:29105"/>
    </ligand>
</feature>
<feature type="binding site" evidence="1">
    <location>
        <position position="250"/>
    </location>
    <ligand>
        <name>Zn(2+)</name>
        <dbReference type="ChEBI" id="CHEBI:29105"/>
    </ligand>
</feature>
<feature type="binding site" evidence="1">
    <location>
        <position position="254"/>
    </location>
    <ligand>
        <name>Zn(2+)</name>
        <dbReference type="ChEBI" id="CHEBI:29105"/>
    </ligand>
</feature>
<feature type="binding site" evidence="1">
    <location>
        <position position="284"/>
    </location>
    <ligand>
        <name>ATP</name>
        <dbReference type="ChEBI" id="CHEBI:30616"/>
    </ligand>
</feature>
<accession>Q164A4</accession>
<gene>
    <name evidence="1" type="primary">cysS</name>
    <name type="ordered locus">RD1_3183</name>
</gene>
<name>SYC_ROSDO</name>
<keyword id="KW-0030">Aminoacyl-tRNA synthetase</keyword>
<keyword id="KW-0067">ATP-binding</keyword>
<keyword id="KW-0963">Cytoplasm</keyword>
<keyword id="KW-0436">Ligase</keyword>
<keyword id="KW-0479">Metal-binding</keyword>
<keyword id="KW-0547">Nucleotide-binding</keyword>
<keyword id="KW-0648">Protein biosynthesis</keyword>
<keyword id="KW-1185">Reference proteome</keyword>
<keyword id="KW-0862">Zinc</keyword>
<protein>
    <recommendedName>
        <fullName evidence="1">Cysteine--tRNA ligase</fullName>
        <ecNumber evidence="1">6.1.1.16</ecNumber>
    </recommendedName>
    <alternativeName>
        <fullName evidence="1">Cysteinyl-tRNA synthetase</fullName>
        <shortName evidence="1">CysRS</shortName>
    </alternativeName>
</protein>
<proteinExistence type="inferred from homology"/>
<comment type="catalytic activity">
    <reaction evidence="1">
        <text>tRNA(Cys) + L-cysteine + ATP = L-cysteinyl-tRNA(Cys) + AMP + diphosphate</text>
        <dbReference type="Rhea" id="RHEA:17773"/>
        <dbReference type="Rhea" id="RHEA-COMP:9661"/>
        <dbReference type="Rhea" id="RHEA-COMP:9679"/>
        <dbReference type="ChEBI" id="CHEBI:30616"/>
        <dbReference type="ChEBI" id="CHEBI:33019"/>
        <dbReference type="ChEBI" id="CHEBI:35235"/>
        <dbReference type="ChEBI" id="CHEBI:78442"/>
        <dbReference type="ChEBI" id="CHEBI:78517"/>
        <dbReference type="ChEBI" id="CHEBI:456215"/>
        <dbReference type="EC" id="6.1.1.16"/>
    </reaction>
</comment>
<comment type="cofactor">
    <cofactor evidence="1">
        <name>Zn(2+)</name>
        <dbReference type="ChEBI" id="CHEBI:29105"/>
    </cofactor>
    <text evidence="1">Binds 1 zinc ion per subunit.</text>
</comment>
<comment type="subunit">
    <text evidence="1">Monomer.</text>
</comment>
<comment type="subcellular location">
    <subcellularLocation>
        <location evidence="1">Cytoplasm</location>
    </subcellularLocation>
</comment>
<comment type="similarity">
    <text evidence="1">Belongs to the class-I aminoacyl-tRNA synthetase family.</text>
</comment>
<reference key="1">
    <citation type="journal article" date="2007" name="J. Bacteriol.">
        <title>The complete genome sequence of Roseobacter denitrificans reveals a mixotrophic rather than photosynthetic metabolism.</title>
        <authorList>
            <person name="Swingley W.D."/>
            <person name="Sadekar S."/>
            <person name="Mastrian S.D."/>
            <person name="Matthies H.J."/>
            <person name="Hao J."/>
            <person name="Ramos H."/>
            <person name="Acharya C.R."/>
            <person name="Conrad A.L."/>
            <person name="Taylor H.L."/>
            <person name="Dejesa L.C."/>
            <person name="Shah M.K."/>
            <person name="O'Huallachain M.E."/>
            <person name="Lince M.T."/>
            <person name="Blankenship R.E."/>
            <person name="Beatty J.T."/>
            <person name="Touchman J.W."/>
        </authorList>
    </citation>
    <scope>NUCLEOTIDE SEQUENCE [LARGE SCALE GENOMIC DNA]</scope>
    <source>
        <strain>ATCC 33942 / OCh 114</strain>
    </source>
</reference>
<dbReference type="EC" id="6.1.1.16" evidence="1"/>
<dbReference type="EMBL" id="CP000362">
    <property type="protein sequence ID" value="ABG32689.1"/>
    <property type="molecule type" value="Genomic_DNA"/>
</dbReference>
<dbReference type="RefSeq" id="WP_011569305.1">
    <property type="nucleotide sequence ID" value="NC_008209.1"/>
</dbReference>
<dbReference type="SMR" id="Q164A4"/>
<dbReference type="STRING" id="375451.RD1_3183"/>
<dbReference type="KEGG" id="rde:RD1_3183"/>
<dbReference type="eggNOG" id="COG0215">
    <property type="taxonomic scope" value="Bacteria"/>
</dbReference>
<dbReference type="HOGENOM" id="CLU_013528_0_1_5"/>
<dbReference type="OrthoDB" id="9815130at2"/>
<dbReference type="Proteomes" id="UP000007029">
    <property type="component" value="Chromosome"/>
</dbReference>
<dbReference type="GO" id="GO:0005829">
    <property type="term" value="C:cytosol"/>
    <property type="evidence" value="ECO:0007669"/>
    <property type="project" value="TreeGrafter"/>
</dbReference>
<dbReference type="GO" id="GO:0005524">
    <property type="term" value="F:ATP binding"/>
    <property type="evidence" value="ECO:0007669"/>
    <property type="project" value="UniProtKB-UniRule"/>
</dbReference>
<dbReference type="GO" id="GO:0004817">
    <property type="term" value="F:cysteine-tRNA ligase activity"/>
    <property type="evidence" value="ECO:0007669"/>
    <property type="project" value="UniProtKB-UniRule"/>
</dbReference>
<dbReference type="GO" id="GO:0008270">
    <property type="term" value="F:zinc ion binding"/>
    <property type="evidence" value="ECO:0007669"/>
    <property type="project" value="UniProtKB-UniRule"/>
</dbReference>
<dbReference type="GO" id="GO:0006423">
    <property type="term" value="P:cysteinyl-tRNA aminoacylation"/>
    <property type="evidence" value="ECO:0007669"/>
    <property type="project" value="UniProtKB-UniRule"/>
</dbReference>
<dbReference type="CDD" id="cd00672">
    <property type="entry name" value="CysRS_core"/>
    <property type="match status" value="1"/>
</dbReference>
<dbReference type="Gene3D" id="1.20.120.1910">
    <property type="entry name" value="Cysteine-tRNA ligase, C-terminal anti-codon recognition domain"/>
    <property type="match status" value="1"/>
</dbReference>
<dbReference type="Gene3D" id="3.40.50.620">
    <property type="entry name" value="HUPs"/>
    <property type="match status" value="1"/>
</dbReference>
<dbReference type="HAMAP" id="MF_00041">
    <property type="entry name" value="Cys_tRNA_synth"/>
    <property type="match status" value="1"/>
</dbReference>
<dbReference type="InterPro" id="IPR015803">
    <property type="entry name" value="Cys-tRNA-ligase"/>
</dbReference>
<dbReference type="InterPro" id="IPR024909">
    <property type="entry name" value="Cys-tRNA/MSH_ligase"/>
</dbReference>
<dbReference type="InterPro" id="IPR014729">
    <property type="entry name" value="Rossmann-like_a/b/a_fold"/>
</dbReference>
<dbReference type="InterPro" id="IPR032678">
    <property type="entry name" value="tRNA-synt_1_cat_dom"/>
</dbReference>
<dbReference type="InterPro" id="IPR009080">
    <property type="entry name" value="tRNAsynth_Ia_anticodon-bd"/>
</dbReference>
<dbReference type="NCBIfam" id="TIGR00435">
    <property type="entry name" value="cysS"/>
    <property type="match status" value="1"/>
</dbReference>
<dbReference type="PANTHER" id="PTHR10890:SF3">
    <property type="entry name" value="CYSTEINE--TRNA LIGASE, CYTOPLASMIC"/>
    <property type="match status" value="1"/>
</dbReference>
<dbReference type="PANTHER" id="PTHR10890">
    <property type="entry name" value="CYSTEINYL-TRNA SYNTHETASE"/>
    <property type="match status" value="1"/>
</dbReference>
<dbReference type="Pfam" id="PF01406">
    <property type="entry name" value="tRNA-synt_1e"/>
    <property type="match status" value="1"/>
</dbReference>
<dbReference type="PRINTS" id="PR00983">
    <property type="entry name" value="TRNASYNTHCYS"/>
</dbReference>
<dbReference type="SUPFAM" id="SSF47323">
    <property type="entry name" value="Anticodon-binding domain of a subclass of class I aminoacyl-tRNA synthetases"/>
    <property type="match status" value="1"/>
</dbReference>
<dbReference type="SUPFAM" id="SSF52374">
    <property type="entry name" value="Nucleotidylyl transferase"/>
    <property type="match status" value="1"/>
</dbReference>
<organism>
    <name type="scientific">Roseobacter denitrificans (strain ATCC 33942 / OCh 114)</name>
    <name type="common">Erythrobacter sp. (strain OCh 114)</name>
    <name type="synonym">Roseobacter denitrificans</name>
    <dbReference type="NCBI Taxonomy" id="375451"/>
    <lineage>
        <taxon>Bacteria</taxon>
        <taxon>Pseudomonadati</taxon>
        <taxon>Pseudomonadota</taxon>
        <taxon>Alphaproteobacteria</taxon>
        <taxon>Rhodobacterales</taxon>
        <taxon>Roseobacteraceae</taxon>
        <taxon>Roseobacter</taxon>
    </lineage>
</organism>